<evidence type="ECO:0000255" key="1">
    <source>
        <dbReference type="HAMAP-Rule" id="MF_01166"/>
    </source>
</evidence>
<sequence>MKTVVFAYHDMGCLGIEALLAAGYEISAIFTHTDNPAEKAFYGSVARLAAERGIPVYAPDNVNHPLWVERIAQLSPEVIFSFYYRHLICDEILQLAPAGAFNLHGSLLPKYRGRAPLNWVLVNGETETGVTLHRMVKRADAGAIVAQLRVAIAPDDIAITLHHKLCHAARQLLEQTLPAIKHGNILEIAQRENEATCFGHRTPDDSFLEWHKPASVLHNMVRAVADPWPGAFSYVGNQKFTVWSSRVHPHASKAQPGSVISVAPLLIACGDGALEIVTGQAGDGITMQGSQLAQMLGLVQGSRLNSQPACTARRRTRVLILGVNGFIGNHLTERLLREDHYEVYGLDIGSDAISRFLNHPHFHFVEGDISIHSEWIEYHVKKCDVVLPLVAIATPIEYTRNPLRVFELDFEENLRIIRYCVKYRKRIIFPSTSEVYGMCSDKYFDEDHSNLIVGPVNKPRWIYSVSKQLLDRVIWAYGEKEGLQFTLFRPFNWMGPRLDNLNAARIGSSRAITQLILNLVEGSPIKLIDGGKQKRCFTDIRDGIEALYRIIENAGNRCDGEIINIGNPENEASIEELGEMLLASFEKHPLRHHFPPFAGFRVVESSSYYGKGYQDVEHRKPSIRNARRCLDWEPKIDMQETIDETLDFFLRTVDLTDKPS</sequence>
<protein>
    <recommendedName>
        <fullName evidence="1">Bifunctional polymyxin resistance protein ArnA</fullName>
    </recommendedName>
    <domain>
        <recommendedName>
            <fullName evidence="1">UDP-4-amino-4-deoxy-L-arabinose formyltransferase</fullName>
            <ecNumber evidence="1">2.1.2.13</ecNumber>
        </recommendedName>
        <alternativeName>
            <fullName evidence="1">ArnAFT</fullName>
        </alternativeName>
        <alternativeName>
            <fullName evidence="1">UDP-L-Ara4N formyltransferase</fullName>
        </alternativeName>
    </domain>
    <domain>
        <recommendedName>
            <fullName evidence="1">UDP-glucuronic acid oxidase, UDP-4-keto-hexauronic acid decarboxylating</fullName>
            <ecNumber evidence="1">1.1.1.305</ecNumber>
        </recommendedName>
        <alternativeName>
            <fullName evidence="1">ArnADH</fullName>
        </alternativeName>
        <alternativeName>
            <fullName evidence="1">UDP-GlcUA decarboxylase</fullName>
        </alternativeName>
        <alternativeName>
            <fullName evidence="1">UDP-glucuronic acid dehydrogenase</fullName>
        </alternativeName>
    </domain>
</protein>
<keyword id="KW-0046">Antibiotic resistance</keyword>
<keyword id="KW-0441">Lipid A biosynthesis</keyword>
<keyword id="KW-0444">Lipid biosynthesis</keyword>
<keyword id="KW-0443">Lipid metabolism</keyword>
<keyword id="KW-0448">Lipopolysaccharide biosynthesis</keyword>
<keyword id="KW-0511">Multifunctional enzyme</keyword>
<keyword id="KW-0520">NAD</keyword>
<keyword id="KW-0560">Oxidoreductase</keyword>
<keyword id="KW-1185">Reference proteome</keyword>
<keyword id="KW-0808">Transferase</keyword>
<gene>
    <name evidence="1" type="primary">arnA</name>
    <name type="ordered locus">SSON_2316</name>
</gene>
<comment type="function">
    <text evidence="1">Bifunctional enzyme that catalyzes the oxidative decarboxylation of UDP-glucuronic acid (UDP-GlcUA) to UDP-4-keto-arabinose (UDP-Ara4O) and the addition of a formyl group to UDP-4-amino-4-deoxy-L-arabinose (UDP-L-Ara4N) to form UDP-L-4-formamido-arabinose (UDP-L-Ara4FN). The modified arabinose is attached to lipid A and is required for resistance to polymyxin and cationic antimicrobial peptides.</text>
</comment>
<comment type="catalytic activity">
    <reaction evidence="1">
        <text>UDP-alpha-D-glucuronate + NAD(+) = UDP-beta-L-threo-pentopyranos-4-ulose + CO2 + NADH</text>
        <dbReference type="Rhea" id="RHEA:24702"/>
        <dbReference type="ChEBI" id="CHEBI:16526"/>
        <dbReference type="ChEBI" id="CHEBI:57540"/>
        <dbReference type="ChEBI" id="CHEBI:57945"/>
        <dbReference type="ChEBI" id="CHEBI:58052"/>
        <dbReference type="ChEBI" id="CHEBI:58710"/>
        <dbReference type="EC" id="1.1.1.305"/>
    </reaction>
</comment>
<comment type="catalytic activity">
    <reaction evidence="1">
        <text>UDP-4-amino-4-deoxy-beta-L-arabinose + (6R)-10-formyltetrahydrofolate = UDP-4-deoxy-4-formamido-beta-L-arabinose + (6S)-5,6,7,8-tetrahydrofolate + H(+)</text>
        <dbReference type="Rhea" id="RHEA:24706"/>
        <dbReference type="ChEBI" id="CHEBI:15378"/>
        <dbReference type="ChEBI" id="CHEBI:57453"/>
        <dbReference type="ChEBI" id="CHEBI:58708"/>
        <dbReference type="ChEBI" id="CHEBI:58709"/>
        <dbReference type="ChEBI" id="CHEBI:195366"/>
        <dbReference type="EC" id="2.1.2.13"/>
    </reaction>
</comment>
<comment type="pathway">
    <text evidence="1">Nucleotide-sugar biosynthesis; UDP-4-deoxy-4-formamido-beta-L-arabinose biosynthesis; UDP-4-deoxy-4-formamido-beta-L-arabinose from UDP-alpha-D-glucuronate: step 1/3.</text>
</comment>
<comment type="pathway">
    <text evidence="1">Nucleotide-sugar biosynthesis; UDP-4-deoxy-4-formamido-beta-L-arabinose biosynthesis; UDP-4-deoxy-4-formamido-beta-L-arabinose from UDP-alpha-D-glucuronate: step 3/3.</text>
</comment>
<comment type="pathway">
    <text evidence="1">Bacterial outer membrane biogenesis; lipopolysaccharide biosynthesis.</text>
</comment>
<comment type="subunit">
    <text evidence="1">Homohexamer, formed by a dimer of trimers.</text>
</comment>
<comment type="similarity">
    <text evidence="1">In the N-terminal section; belongs to the Fmt family. UDP-L-Ara4N formyltransferase subfamily.</text>
</comment>
<comment type="similarity">
    <text evidence="1">In the C-terminal section; belongs to the NAD(P)-dependent epimerase/dehydratase family. UDP-glucuronic acid decarboxylase subfamily.</text>
</comment>
<accession>Q3YZV1</accession>
<organism>
    <name type="scientific">Shigella sonnei (strain Ss046)</name>
    <dbReference type="NCBI Taxonomy" id="300269"/>
    <lineage>
        <taxon>Bacteria</taxon>
        <taxon>Pseudomonadati</taxon>
        <taxon>Pseudomonadota</taxon>
        <taxon>Gammaproteobacteria</taxon>
        <taxon>Enterobacterales</taxon>
        <taxon>Enterobacteriaceae</taxon>
        <taxon>Shigella</taxon>
    </lineage>
</organism>
<feature type="chain" id="PRO_0000281730" description="Bifunctional polymyxin resistance protein ArnA">
    <location>
        <begin position="1"/>
        <end position="660"/>
    </location>
</feature>
<feature type="region of interest" description="Formyltransferase ArnAFT">
    <location>
        <begin position="1"/>
        <end position="304"/>
    </location>
</feature>
<feature type="region of interest" description="Dehydrogenase ArnADH">
    <location>
        <begin position="314"/>
        <end position="660"/>
    </location>
</feature>
<feature type="active site" description="Proton donor; for formyltransferase activity" evidence="1">
    <location>
        <position position="104"/>
    </location>
</feature>
<feature type="active site" description="Proton acceptor; for decarboxylase activity" evidence="1">
    <location>
        <position position="434"/>
    </location>
</feature>
<feature type="active site" description="Proton donor; for decarboxylase activity" evidence="1">
    <location>
        <position position="619"/>
    </location>
</feature>
<feature type="binding site" evidence="1">
    <location>
        <begin position="86"/>
        <end position="88"/>
    </location>
    <ligand>
        <name>(6R)-10-formyltetrahydrofolate</name>
        <dbReference type="ChEBI" id="CHEBI:195366"/>
    </ligand>
</feature>
<feature type="binding site" evidence="1">
    <location>
        <position position="114"/>
    </location>
    <ligand>
        <name>(6R)-10-formyltetrahydrofolate</name>
        <dbReference type="ChEBI" id="CHEBI:195366"/>
    </ligand>
</feature>
<feature type="binding site" evidence="1">
    <location>
        <begin position="136"/>
        <end position="140"/>
    </location>
    <ligand>
        <name>(6R)-10-formyltetrahydrofolate</name>
        <dbReference type="ChEBI" id="CHEBI:195366"/>
    </ligand>
</feature>
<feature type="binding site" evidence="1">
    <location>
        <position position="347"/>
    </location>
    <ligand>
        <name>NAD(+)</name>
        <dbReference type="ChEBI" id="CHEBI:57540"/>
    </ligand>
</feature>
<feature type="binding site" evidence="1">
    <location>
        <begin position="368"/>
        <end position="369"/>
    </location>
    <ligand>
        <name>NAD(+)</name>
        <dbReference type="ChEBI" id="CHEBI:57540"/>
    </ligand>
</feature>
<feature type="binding site" evidence="1">
    <location>
        <position position="393"/>
    </location>
    <ligand>
        <name>UDP-alpha-D-glucuronate</name>
        <dbReference type="ChEBI" id="CHEBI:58052"/>
    </ligand>
</feature>
<feature type="binding site" evidence="1">
    <location>
        <position position="398"/>
    </location>
    <ligand>
        <name>UDP-alpha-D-glucuronate</name>
        <dbReference type="ChEBI" id="CHEBI:58052"/>
    </ligand>
</feature>
<feature type="binding site" evidence="1">
    <location>
        <begin position="432"/>
        <end position="433"/>
    </location>
    <ligand>
        <name>UDP-alpha-D-glucuronate</name>
        <dbReference type="ChEBI" id="CHEBI:58052"/>
    </ligand>
</feature>
<feature type="binding site" evidence="1">
    <location>
        <position position="460"/>
    </location>
    <ligand>
        <name>UDP-alpha-D-glucuronate</name>
        <dbReference type="ChEBI" id="CHEBI:58052"/>
    </ligand>
</feature>
<feature type="binding site" evidence="1">
    <location>
        <position position="492"/>
    </location>
    <ligand>
        <name>UDP-alpha-D-glucuronate</name>
        <dbReference type="ChEBI" id="CHEBI:58052"/>
    </ligand>
</feature>
<feature type="binding site" evidence="1">
    <location>
        <begin position="526"/>
        <end position="535"/>
    </location>
    <ligand>
        <name>UDP-alpha-D-glucuronate</name>
        <dbReference type="ChEBI" id="CHEBI:58052"/>
    </ligand>
</feature>
<feature type="binding site" evidence="1">
    <location>
        <position position="613"/>
    </location>
    <ligand>
        <name>UDP-alpha-D-glucuronate</name>
        <dbReference type="ChEBI" id="CHEBI:58052"/>
    </ligand>
</feature>
<feature type="site" description="Transition state stabilizer" evidence="1">
    <location>
        <position position="102"/>
    </location>
</feature>
<feature type="site" description="Raises pKa of active site His" evidence="1">
    <location>
        <position position="140"/>
    </location>
</feature>
<dbReference type="EC" id="2.1.2.13" evidence="1"/>
<dbReference type="EC" id="1.1.1.305" evidence="1"/>
<dbReference type="EMBL" id="CP000038">
    <property type="protein sequence ID" value="AAZ88961.1"/>
    <property type="molecule type" value="Genomic_DNA"/>
</dbReference>
<dbReference type="RefSeq" id="WP_000860235.1">
    <property type="nucleotide sequence ID" value="NC_007384.1"/>
</dbReference>
<dbReference type="SMR" id="Q3YZV1"/>
<dbReference type="GeneID" id="93774919"/>
<dbReference type="KEGG" id="ssn:SSON_2316"/>
<dbReference type="HOGENOM" id="CLU_007383_23_2_6"/>
<dbReference type="UniPathway" id="UPA00030"/>
<dbReference type="UniPathway" id="UPA00032">
    <property type="reaction ID" value="UER00492"/>
</dbReference>
<dbReference type="UniPathway" id="UPA00032">
    <property type="reaction ID" value="UER00494"/>
</dbReference>
<dbReference type="Proteomes" id="UP000002529">
    <property type="component" value="Chromosome"/>
</dbReference>
<dbReference type="GO" id="GO:0016020">
    <property type="term" value="C:membrane"/>
    <property type="evidence" value="ECO:0007669"/>
    <property type="project" value="GOC"/>
</dbReference>
<dbReference type="GO" id="GO:0016831">
    <property type="term" value="F:carboxy-lyase activity"/>
    <property type="evidence" value="ECO:0007669"/>
    <property type="project" value="InterPro"/>
</dbReference>
<dbReference type="GO" id="GO:0099619">
    <property type="term" value="F:UDP-4-amino-4-deoxy-L-arabinose formyltransferase activity"/>
    <property type="evidence" value="ECO:0007669"/>
    <property type="project" value="UniProtKB-EC"/>
</dbReference>
<dbReference type="GO" id="GO:0099618">
    <property type="term" value="F:UDP-glucuronate dehydrogenase activity"/>
    <property type="evidence" value="ECO:0007669"/>
    <property type="project" value="UniProtKB-EC"/>
</dbReference>
<dbReference type="GO" id="GO:0009245">
    <property type="term" value="P:lipid A biosynthetic process"/>
    <property type="evidence" value="ECO:0007669"/>
    <property type="project" value="UniProtKB-KW"/>
</dbReference>
<dbReference type="GO" id="GO:0009103">
    <property type="term" value="P:lipopolysaccharide biosynthetic process"/>
    <property type="evidence" value="ECO:0007669"/>
    <property type="project" value="UniProtKB-UniRule"/>
</dbReference>
<dbReference type="GO" id="GO:0046677">
    <property type="term" value="P:response to antibiotic"/>
    <property type="evidence" value="ECO:0007669"/>
    <property type="project" value="UniProtKB-KW"/>
</dbReference>
<dbReference type="CDD" id="cd08702">
    <property type="entry name" value="Arna_FMT_C"/>
    <property type="match status" value="1"/>
</dbReference>
<dbReference type="CDD" id="cd05257">
    <property type="entry name" value="Arna_like_SDR_e"/>
    <property type="match status" value="1"/>
</dbReference>
<dbReference type="CDD" id="cd08644">
    <property type="entry name" value="FMT_core_ArnA_N"/>
    <property type="match status" value="1"/>
</dbReference>
<dbReference type="FunFam" id="3.40.50.12230:FF:000002">
    <property type="entry name" value="Bifunctional polymyxin resistance protein ArnA"/>
    <property type="match status" value="1"/>
</dbReference>
<dbReference type="FunFam" id="3.40.50.720:FF:000197">
    <property type="entry name" value="Bifunctional polymyxin resistance protein ArnA"/>
    <property type="match status" value="1"/>
</dbReference>
<dbReference type="Gene3D" id="3.40.50.12230">
    <property type="match status" value="1"/>
</dbReference>
<dbReference type="Gene3D" id="3.40.50.720">
    <property type="entry name" value="NAD(P)-binding Rossmann-like Domain"/>
    <property type="match status" value="1"/>
</dbReference>
<dbReference type="HAMAP" id="MF_01166">
    <property type="entry name" value="ArnA"/>
    <property type="match status" value="1"/>
</dbReference>
<dbReference type="InterPro" id="IPR045869">
    <property type="entry name" value="Arna-like_SDR_e"/>
</dbReference>
<dbReference type="InterPro" id="IPR021168">
    <property type="entry name" value="Bifun_polymyxin_resist_ArnA"/>
</dbReference>
<dbReference type="InterPro" id="IPR001509">
    <property type="entry name" value="Epimerase_deHydtase"/>
</dbReference>
<dbReference type="InterPro" id="IPR005793">
    <property type="entry name" value="Formyl_trans_C"/>
</dbReference>
<dbReference type="InterPro" id="IPR002376">
    <property type="entry name" value="Formyl_transf_N"/>
</dbReference>
<dbReference type="InterPro" id="IPR036477">
    <property type="entry name" value="Formyl_transf_N_sf"/>
</dbReference>
<dbReference type="InterPro" id="IPR011034">
    <property type="entry name" value="Formyl_transferase-like_C_sf"/>
</dbReference>
<dbReference type="InterPro" id="IPR050177">
    <property type="entry name" value="Lipid_A_modif_metabolic_enz"/>
</dbReference>
<dbReference type="InterPro" id="IPR036291">
    <property type="entry name" value="NAD(P)-bd_dom_sf"/>
</dbReference>
<dbReference type="NCBIfam" id="NF005414">
    <property type="entry name" value="PRK06988.1"/>
    <property type="match status" value="1"/>
</dbReference>
<dbReference type="NCBIfam" id="NF005998">
    <property type="entry name" value="PRK08125.1"/>
    <property type="match status" value="1"/>
</dbReference>
<dbReference type="NCBIfam" id="NF008872">
    <property type="entry name" value="PRK11908.1"/>
    <property type="match status" value="1"/>
</dbReference>
<dbReference type="PANTHER" id="PTHR43245">
    <property type="entry name" value="BIFUNCTIONAL POLYMYXIN RESISTANCE PROTEIN ARNA"/>
    <property type="match status" value="1"/>
</dbReference>
<dbReference type="PANTHER" id="PTHR43245:SF13">
    <property type="entry name" value="UDP-D-APIOSE_UDP-D-XYLOSE SYNTHASE 2"/>
    <property type="match status" value="1"/>
</dbReference>
<dbReference type="Pfam" id="PF01370">
    <property type="entry name" value="Epimerase"/>
    <property type="match status" value="1"/>
</dbReference>
<dbReference type="Pfam" id="PF02911">
    <property type="entry name" value="Formyl_trans_C"/>
    <property type="match status" value="1"/>
</dbReference>
<dbReference type="Pfam" id="PF00551">
    <property type="entry name" value="Formyl_trans_N"/>
    <property type="match status" value="1"/>
</dbReference>
<dbReference type="PIRSF" id="PIRSF036506">
    <property type="entry name" value="Bifun_polymyxin_resist_ArnA"/>
    <property type="match status" value="1"/>
</dbReference>
<dbReference type="SUPFAM" id="SSF50486">
    <property type="entry name" value="FMT C-terminal domain-like"/>
    <property type="match status" value="1"/>
</dbReference>
<dbReference type="SUPFAM" id="SSF53328">
    <property type="entry name" value="Formyltransferase"/>
    <property type="match status" value="1"/>
</dbReference>
<dbReference type="SUPFAM" id="SSF51735">
    <property type="entry name" value="NAD(P)-binding Rossmann-fold domains"/>
    <property type="match status" value="1"/>
</dbReference>
<proteinExistence type="inferred from homology"/>
<reference key="1">
    <citation type="journal article" date="2005" name="Nucleic Acids Res.">
        <title>Genome dynamics and diversity of Shigella species, the etiologic agents of bacillary dysentery.</title>
        <authorList>
            <person name="Yang F."/>
            <person name="Yang J."/>
            <person name="Zhang X."/>
            <person name="Chen L."/>
            <person name="Jiang Y."/>
            <person name="Yan Y."/>
            <person name="Tang X."/>
            <person name="Wang J."/>
            <person name="Xiong Z."/>
            <person name="Dong J."/>
            <person name="Xue Y."/>
            <person name="Zhu Y."/>
            <person name="Xu X."/>
            <person name="Sun L."/>
            <person name="Chen S."/>
            <person name="Nie H."/>
            <person name="Peng J."/>
            <person name="Xu J."/>
            <person name="Wang Y."/>
            <person name="Yuan Z."/>
            <person name="Wen Y."/>
            <person name="Yao Z."/>
            <person name="Shen Y."/>
            <person name="Qiang B."/>
            <person name="Hou Y."/>
            <person name="Yu J."/>
            <person name="Jin Q."/>
        </authorList>
    </citation>
    <scope>NUCLEOTIDE SEQUENCE [LARGE SCALE GENOMIC DNA]</scope>
    <source>
        <strain>Ss046</strain>
    </source>
</reference>
<name>ARNA_SHISS</name>